<feature type="chain" id="PRO_0000151349" description="Ketol-acid reductoisomerase (NADP(+))">
    <location>
        <begin position="1"/>
        <end position="339"/>
    </location>
</feature>
<feature type="domain" description="KARI N-terminal Rossmann" evidence="2">
    <location>
        <begin position="1"/>
        <end position="182"/>
    </location>
</feature>
<feature type="domain" description="KARI C-terminal knotted" evidence="3">
    <location>
        <begin position="183"/>
        <end position="328"/>
    </location>
</feature>
<feature type="active site" evidence="1">
    <location>
        <position position="108"/>
    </location>
</feature>
<feature type="binding site" evidence="1">
    <location>
        <begin position="24"/>
        <end position="27"/>
    </location>
    <ligand>
        <name>NADP(+)</name>
        <dbReference type="ChEBI" id="CHEBI:58349"/>
    </ligand>
</feature>
<feature type="binding site" evidence="1">
    <location>
        <position position="48"/>
    </location>
    <ligand>
        <name>NADP(+)</name>
        <dbReference type="ChEBI" id="CHEBI:58349"/>
    </ligand>
</feature>
<feature type="binding site" evidence="1">
    <location>
        <position position="51"/>
    </location>
    <ligand>
        <name>NADP(+)</name>
        <dbReference type="ChEBI" id="CHEBI:58349"/>
    </ligand>
</feature>
<feature type="binding site" evidence="1">
    <location>
        <position position="53"/>
    </location>
    <ligand>
        <name>NADP(+)</name>
        <dbReference type="ChEBI" id="CHEBI:58349"/>
    </ligand>
</feature>
<feature type="binding site" evidence="1">
    <location>
        <begin position="83"/>
        <end position="86"/>
    </location>
    <ligand>
        <name>NADP(+)</name>
        <dbReference type="ChEBI" id="CHEBI:58349"/>
    </ligand>
</feature>
<feature type="binding site" evidence="1">
    <location>
        <position position="134"/>
    </location>
    <ligand>
        <name>NADP(+)</name>
        <dbReference type="ChEBI" id="CHEBI:58349"/>
    </ligand>
</feature>
<feature type="binding site" evidence="1">
    <location>
        <position position="191"/>
    </location>
    <ligand>
        <name>Mg(2+)</name>
        <dbReference type="ChEBI" id="CHEBI:18420"/>
        <label>1</label>
    </ligand>
</feature>
<feature type="binding site" evidence="1">
    <location>
        <position position="191"/>
    </location>
    <ligand>
        <name>Mg(2+)</name>
        <dbReference type="ChEBI" id="CHEBI:18420"/>
        <label>2</label>
    </ligand>
</feature>
<feature type="binding site" evidence="1">
    <location>
        <position position="195"/>
    </location>
    <ligand>
        <name>Mg(2+)</name>
        <dbReference type="ChEBI" id="CHEBI:18420"/>
        <label>1</label>
    </ligand>
</feature>
<feature type="binding site" evidence="1">
    <location>
        <position position="227"/>
    </location>
    <ligand>
        <name>Mg(2+)</name>
        <dbReference type="ChEBI" id="CHEBI:18420"/>
        <label>2</label>
    </ligand>
</feature>
<feature type="binding site" evidence="1">
    <location>
        <position position="231"/>
    </location>
    <ligand>
        <name>Mg(2+)</name>
        <dbReference type="ChEBI" id="CHEBI:18420"/>
        <label>2</label>
    </ligand>
</feature>
<feature type="binding site" evidence="1">
    <location>
        <position position="252"/>
    </location>
    <ligand>
        <name>substrate</name>
    </ligand>
</feature>
<organism>
    <name type="scientific">Magnetospirillum molischianum</name>
    <name type="common">Rhodospirillum molischianum</name>
    <dbReference type="NCBI Taxonomy" id="1083"/>
    <lineage>
        <taxon>Bacteria</taxon>
        <taxon>Pseudomonadati</taxon>
        <taxon>Pseudomonadota</taxon>
        <taxon>Alphaproteobacteria</taxon>
        <taxon>Rhodospirillales</taxon>
        <taxon>Rhodospirillaceae</taxon>
        <taxon>Magnetospirillum</taxon>
    </lineage>
</organism>
<evidence type="ECO:0000255" key="1">
    <source>
        <dbReference type="HAMAP-Rule" id="MF_00435"/>
    </source>
</evidence>
<evidence type="ECO:0000255" key="2">
    <source>
        <dbReference type="PROSITE-ProRule" id="PRU01197"/>
    </source>
</evidence>
<evidence type="ECO:0000255" key="3">
    <source>
        <dbReference type="PROSITE-ProRule" id="PRU01198"/>
    </source>
</evidence>
<accession>O32414</accession>
<comment type="function">
    <text evidence="1">Involved in the biosynthesis of branched-chain amino acids (BCAA). Catalyzes an alkyl-migration followed by a ketol-acid reduction of (S)-2-acetolactate (S2AL) to yield (R)-2,3-dihydroxy-isovalerate. In the isomerase reaction, S2AL is rearranged via a Mg-dependent methyl migration to produce 3-hydroxy-3-methyl-2-ketobutyrate (HMKB). In the reductase reaction, this 2-ketoacid undergoes a metal-dependent reduction by NADPH to yield (R)-2,3-dihydroxy-isovalerate.</text>
</comment>
<comment type="catalytic activity">
    <reaction evidence="1">
        <text>(2R)-2,3-dihydroxy-3-methylbutanoate + NADP(+) = (2S)-2-acetolactate + NADPH + H(+)</text>
        <dbReference type="Rhea" id="RHEA:22068"/>
        <dbReference type="ChEBI" id="CHEBI:15378"/>
        <dbReference type="ChEBI" id="CHEBI:49072"/>
        <dbReference type="ChEBI" id="CHEBI:57783"/>
        <dbReference type="ChEBI" id="CHEBI:58349"/>
        <dbReference type="ChEBI" id="CHEBI:58476"/>
        <dbReference type="EC" id="1.1.1.86"/>
    </reaction>
</comment>
<comment type="catalytic activity">
    <reaction evidence="1">
        <text>(2R,3R)-2,3-dihydroxy-3-methylpentanoate + NADP(+) = (S)-2-ethyl-2-hydroxy-3-oxobutanoate + NADPH + H(+)</text>
        <dbReference type="Rhea" id="RHEA:13493"/>
        <dbReference type="ChEBI" id="CHEBI:15378"/>
        <dbReference type="ChEBI" id="CHEBI:49256"/>
        <dbReference type="ChEBI" id="CHEBI:49258"/>
        <dbReference type="ChEBI" id="CHEBI:57783"/>
        <dbReference type="ChEBI" id="CHEBI:58349"/>
        <dbReference type="EC" id="1.1.1.86"/>
    </reaction>
</comment>
<comment type="cofactor">
    <cofactor evidence="1">
        <name>Mg(2+)</name>
        <dbReference type="ChEBI" id="CHEBI:18420"/>
    </cofactor>
    <text evidence="1">Binds 2 magnesium ions per subunit.</text>
</comment>
<comment type="pathway">
    <text evidence="1">Amino-acid biosynthesis; L-isoleucine biosynthesis; L-isoleucine from 2-oxobutanoate: step 2/4.</text>
</comment>
<comment type="pathway">
    <text evidence="1">Amino-acid biosynthesis; L-valine biosynthesis; L-valine from pyruvate: step 2/4.</text>
</comment>
<comment type="similarity">
    <text evidence="1">Belongs to the ketol-acid reductoisomerase family.</text>
</comment>
<dbReference type="EC" id="1.1.1.86" evidence="1"/>
<dbReference type="EMBL" id="D50654">
    <property type="protein sequence ID" value="BAA22800.1"/>
    <property type="molecule type" value="Genomic_DNA"/>
</dbReference>
<dbReference type="UniPathway" id="UPA00047">
    <property type="reaction ID" value="UER00056"/>
</dbReference>
<dbReference type="UniPathway" id="UPA00049">
    <property type="reaction ID" value="UER00060"/>
</dbReference>
<dbReference type="GO" id="GO:0005829">
    <property type="term" value="C:cytosol"/>
    <property type="evidence" value="ECO:0007669"/>
    <property type="project" value="TreeGrafter"/>
</dbReference>
<dbReference type="GO" id="GO:0004455">
    <property type="term" value="F:ketol-acid reductoisomerase activity"/>
    <property type="evidence" value="ECO:0007669"/>
    <property type="project" value="UniProtKB-UniRule"/>
</dbReference>
<dbReference type="GO" id="GO:0000287">
    <property type="term" value="F:magnesium ion binding"/>
    <property type="evidence" value="ECO:0007669"/>
    <property type="project" value="UniProtKB-UniRule"/>
</dbReference>
<dbReference type="GO" id="GO:0050661">
    <property type="term" value="F:NADP binding"/>
    <property type="evidence" value="ECO:0007669"/>
    <property type="project" value="InterPro"/>
</dbReference>
<dbReference type="GO" id="GO:0009097">
    <property type="term" value="P:isoleucine biosynthetic process"/>
    <property type="evidence" value="ECO:0007669"/>
    <property type="project" value="UniProtKB-UniRule"/>
</dbReference>
<dbReference type="GO" id="GO:0009099">
    <property type="term" value="P:L-valine biosynthetic process"/>
    <property type="evidence" value="ECO:0007669"/>
    <property type="project" value="UniProtKB-UniRule"/>
</dbReference>
<dbReference type="FunFam" id="3.40.50.720:FF:000023">
    <property type="entry name" value="Ketol-acid reductoisomerase (NADP(+))"/>
    <property type="match status" value="1"/>
</dbReference>
<dbReference type="Gene3D" id="6.10.240.10">
    <property type="match status" value="1"/>
</dbReference>
<dbReference type="Gene3D" id="3.40.50.720">
    <property type="entry name" value="NAD(P)-binding Rossmann-like Domain"/>
    <property type="match status" value="1"/>
</dbReference>
<dbReference type="HAMAP" id="MF_00435">
    <property type="entry name" value="IlvC"/>
    <property type="match status" value="1"/>
</dbReference>
<dbReference type="InterPro" id="IPR008927">
    <property type="entry name" value="6-PGluconate_DH-like_C_sf"/>
</dbReference>
<dbReference type="InterPro" id="IPR013023">
    <property type="entry name" value="KARI"/>
</dbReference>
<dbReference type="InterPro" id="IPR000506">
    <property type="entry name" value="KARI_C"/>
</dbReference>
<dbReference type="InterPro" id="IPR013116">
    <property type="entry name" value="KARI_N"/>
</dbReference>
<dbReference type="InterPro" id="IPR014359">
    <property type="entry name" value="KARI_prok"/>
</dbReference>
<dbReference type="InterPro" id="IPR036291">
    <property type="entry name" value="NAD(P)-bd_dom_sf"/>
</dbReference>
<dbReference type="NCBIfam" id="TIGR00465">
    <property type="entry name" value="ilvC"/>
    <property type="match status" value="1"/>
</dbReference>
<dbReference type="NCBIfam" id="NF004017">
    <property type="entry name" value="PRK05479.1"/>
    <property type="match status" value="1"/>
</dbReference>
<dbReference type="NCBIfam" id="NF009940">
    <property type="entry name" value="PRK13403.1"/>
    <property type="match status" value="1"/>
</dbReference>
<dbReference type="PANTHER" id="PTHR21371">
    <property type="entry name" value="KETOL-ACID REDUCTOISOMERASE, MITOCHONDRIAL"/>
    <property type="match status" value="1"/>
</dbReference>
<dbReference type="PANTHER" id="PTHR21371:SF1">
    <property type="entry name" value="KETOL-ACID REDUCTOISOMERASE, MITOCHONDRIAL"/>
    <property type="match status" value="1"/>
</dbReference>
<dbReference type="Pfam" id="PF01450">
    <property type="entry name" value="KARI_C"/>
    <property type="match status" value="1"/>
</dbReference>
<dbReference type="Pfam" id="PF07991">
    <property type="entry name" value="KARI_N"/>
    <property type="match status" value="1"/>
</dbReference>
<dbReference type="PIRSF" id="PIRSF000116">
    <property type="entry name" value="IlvC_gammaproteo"/>
    <property type="match status" value="1"/>
</dbReference>
<dbReference type="SUPFAM" id="SSF48179">
    <property type="entry name" value="6-phosphogluconate dehydrogenase C-terminal domain-like"/>
    <property type="match status" value="1"/>
</dbReference>
<dbReference type="SUPFAM" id="SSF51735">
    <property type="entry name" value="NAD(P)-binding Rossmann-fold domains"/>
    <property type="match status" value="1"/>
</dbReference>
<dbReference type="PROSITE" id="PS51851">
    <property type="entry name" value="KARI_C"/>
    <property type="match status" value="1"/>
</dbReference>
<dbReference type="PROSITE" id="PS51850">
    <property type="entry name" value="KARI_N"/>
    <property type="match status" value="1"/>
</dbReference>
<gene>
    <name evidence="1" type="primary">ilvC</name>
</gene>
<protein>
    <recommendedName>
        <fullName evidence="1">Ketol-acid reductoisomerase (NADP(+))</fullName>
        <shortName evidence="1">KARI</shortName>
        <ecNumber evidence="1">1.1.1.86</ecNumber>
    </recommendedName>
    <alternativeName>
        <fullName evidence="1">Acetohydroxy-acid isomeroreductase</fullName>
        <shortName evidence="1">AHIR</shortName>
    </alternativeName>
    <alternativeName>
        <fullName evidence="1">Alpha-keto-beta-hydroxylacyl reductoisomerase</fullName>
    </alternativeName>
    <alternativeName>
        <fullName evidence="1">Ketol-acid reductoisomerase type 1</fullName>
    </alternativeName>
    <alternativeName>
        <fullName evidence="1">Ketol-acid reductoisomerase type I</fullName>
    </alternativeName>
</protein>
<sequence length="339" mass="36819">MRVYYDRDADVNLIKSKKVAVIGYGSQGHAHVLNLRDSGVKDVAVALRPGSASIKKAEAEGLKVLTPAEAAAWADVVMILTPDELQADLYKSELAANLKPGAALVFAHGLAIHFKLIEARADLDVFMVAPKGPGHTVRGEYLKGGGVPCLVAVAQNPTGNALELALSYASAIGGGRSGIIETTFREECETDLFGEQVVLCGGLSKLIQYGFETLVEAGYAPEMAYFECLHEVKLIVDLIYEGGIANMRYSISNTAEYGDYVTGSRIITEATKAEMKRVLADIQSGRFVRDWMLECKAGQPSFKATRRIQXEHVIEVVGEKLRGMMPWISKNKLVDKARN</sequence>
<proteinExistence type="inferred from homology"/>
<reference key="1">
    <citation type="submission" date="1995-05" db="EMBL/GenBank/DDBJ databases">
        <title>Primary structure of gene coding for acetohydroxy acid isomeroreductase (ilvC) of purple bacterium, Rhodospirillum molischianum.</title>
        <authorList>
            <person name="Nagashima K.V."/>
            <person name="Matsuura K."/>
            <person name="Shimada K."/>
        </authorList>
    </citation>
    <scope>NUCLEOTIDE SEQUENCE [GENOMIC DNA]</scope>
</reference>
<keyword id="KW-0028">Amino-acid biosynthesis</keyword>
<keyword id="KW-0100">Branched-chain amino acid biosynthesis</keyword>
<keyword id="KW-0460">Magnesium</keyword>
<keyword id="KW-0479">Metal-binding</keyword>
<keyword id="KW-0521">NADP</keyword>
<keyword id="KW-0560">Oxidoreductase</keyword>
<name>ILVC_MAGML</name>